<sequence length="830" mass="93256">MKLSRRDFMKANAAVAAAAAAGMTIPTVAKAVGETTNAIKWDKAPCRFCGTGCGVLVGTQNGRIVASQGDPDSPVNRGLNCIKGYFLPKIMYGKDRLTQPLLRMKDGQYDKEGDFTPISWEKAFDIMELKFKNALKEKGPTAVGMFGSGQWTVWEGYAALKLLKGGFRSNNLDPNARHCMASSVVGFMRTFGMDEPMGCYDDIEEADAFVLWGSNMAEMHPVLWSRMTSRRLTNAHVRIAVLSTYEHRSFELADNPIVFTPQTDLVIMNYIANYIIQNNAVDKDFLAQHVNFRRGATDIGYGLRPTHPLEKAAKNPGSDASEPMSFEDFKTFVAEYTLEKTAKMSGVPEDQLESLAQLYADPKVKLVSYWTMGFNQHTRGVWANNMCYNLHLLTGKISTPGSGPFSLTGQPSACGTAREVGTFSHRLPADMVVTNEKHRQIAETTWQLPAGTIPEKVGLHAVAQDRALKDGTLNAYWVMCNNNMQAGPNINEERMPGWRDPRNFIVVSDPYPTISALSADLILPTSMWVEKEGAYGNAERRTQFWRQQVPSPGEAKSDLWQIVEFAKRFNVEEVWPAELVNQKPEYRGKNLYEVLFANDVVSKYPLSEIPDDQLNDEARDFGFYIQKGLFEEYASFGRGHAHDLAPFDVYHQVRGLRWPVVDGKETLWRYREGFDPFVPKGEEVRFYGKPDGKAVIFALPYEPAAESPDQEYDLWLSTGRVLEHWHTGSMTRRVPELHRAFPEAVLFIHPLDAKARGLHRGDKVKVISRRGEVISLVETRGRNRPPRGLVYMPFFDAAQLVNNLTLDATDPLSKETDFKKCAVKLERVVA</sequence>
<organism>
    <name type="scientific">Yersinia pestis bv. Antiqua (strain Angola)</name>
    <dbReference type="NCBI Taxonomy" id="349746"/>
    <lineage>
        <taxon>Bacteria</taxon>
        <taxon>Pseudomonadati</taxon>
        <taxon>Pseudomonadota</taxon>
        <taxon>Gammaproteobacteria</taxon>
        <taxon>Enterobacterales</taxon>
        <taxon>Yersiniaceae</taxon>
        <taxon>Yersinia</taxon>
    </lineage>
</organism>
<gene>
    <name evidence="1" type="primary">napA</name>
    <name type="ordered locus">YpAngola_A2791</name>
</gene>
<evidence type="ECO:0000255" key="1">
    <source>
        <dbReference type="HAMAP-Rule" id="MF_01630"/>
    </source>
</evidence>
<accession>A9QZL3</accession>
<protein>
    <recommendedName>
        <fullName evidence="1">Periplasmic nitrate reductase</fullName>
        <ecNumber evidence="1">1.9.6.1</ecNumber>
    </recommendedName>
</protein>
<reference key="1">
    <citation type="journal article" date="2010" name="J. Bacteriol.">
        <title>Genome sequence of the deep-rooted Yersinia pestis strain Angola reveals new insights into the evolution and pangenome of the plague bacterium.</title>
        <authorList>
            <person name="Eppinger M."/>
            <person name="Worsham P.L."/>
            <person name="Nikolich M.P."/>
            <person name="Riley D.R."/>
            <person name="Sebastian Y."/>
            <person name="Mou S."/>
            <person name="Achtman M."/>
            <person name="Lindler L.E."/>
            <person name="Ravel J."/>
        </authorList>
    </citation>
    <scope>NUCLEOTIDE SEQUENCE [LARGE SCALE GENOMIC DNA]</scope>
    <source>
        <strain>Angola</strain>
    </source>
</reference>
<feature type="signal peptide" description="Tat-type signal" evidence="1">
    <location>
        <begin position="1"/>
        <end position="31"/>
    </location>
</feature>
<feature type="chain" id="PRO_1000186380" description="Periplasmic nitrate reductase" evidence="1">
    <location>
        <begin position="32"/>
        <end position="830"/>
    </location>
</feature>
<feature type="domain" description="4Fe-4S Mo/W bis-MGD-type" evidence="1">
    <location>
        <begin position="39"/>
        <end position="95"/>
    </location>
</feature>
<feature type="binding site" evidence="1">
    <location>
        <position position="46"/>
    </location>
    <ligand>
        <name>[4Fe-4S] cluster</name>
        <dbReference type="ChEBI" id="CHEBI:49883"/>
    </ligand>
</feature>
<feature type="binding site" evidence="1">
    <location>
        <position position="49"/>
    </location>
    <ligand>
        <name>[4Fe-4S] cluster</name>
        <dbReference type="ChEBI" id="CHEBI:49883"/>
    </ligand>
</feature>
<feature type="binding site" evidence="1">
    <location>
        <position position="53"/>
    </location>
    <ligand>
        <name>[4Fe-4S] cluster</name>
        <dbReference type="ChEBI" id="CHEBI:49883"/>
    </ligand>
</feature>
<feature type="binding site" evidence="1">
    <location>
        <position position="81"/>
    </location>
    <ligand>
        <name>[4Fe-4S] cluster</name>
        <dbReference type="ChEBI" id="CHEBI:49883"/>
    </ligand>
</feature>
<feature type="binding site" evidence="1">
    <location>
        <position position="83"/>
    </location>
    <ligand>
        <name>Mo-bis(molybdopterin guanine dinucleotide)</name>
        <dbReference type="ChEBI" id="CHEBI:60539"/>
    </ligand>
</feature>
<feature type="binding site" evidence="1">
    <location>
        <position position="150"/>
    </location>
    <ligand>
        <name>Mo-bis(molybdopterin guanine dinucleotide)</name>
        <dbReference type="ChEBI" id="CHEBI:60539"/>
    </ligand>
</feature>
<feature type="binding site" evidence="1">
    <location>
        <position position="175"/>
    </location>
    <ligand>
        <name>Mo-bis(molybdopterin guanine dinucleotide)</name>
        <dbReference type="ChEBI" id="CHEBI:60539"/>
    </ligand>
</feature>
<feature type="binding site" evidence="1">
    <location>
        <position position="179"/>
    </location>
    <ligand>
        <name>Mo-bis(molybdopterin guanine dinucleotide)</name>
        <dbReference type="ChEBI" id="CHEBI:60539"/>
    </ligand>
</feature>
<feature type="binding site" evidence="1">
    <location>
        <begin position="212"/>
        <end position="219"/>
    </location>
    <ligand>
        <name>Mo-bis(molybdopterin guanine dinucleotide)</name>
        <dbReference type="ChEBI" id="CHEBI:60539"/>
    </ligand>
</feature>
<feature type="binding site" evidence="1">
    <location>
        <begin position="243"/>
        <end position="247"/>
    </location>
    <ligand>
        <name>Mo-bis(molybdopterin guanine dinucleotide)</name>
        <dbReference type="ChEBI" id="CHEBI:60539"/>
    </ligand>
</feature>
<feature type="binding site" evidence="1">
    <location>
        <begin position="262"/>
        <end position="264"/>
    </location>
    <ligand>
        <name>Mo-bis(molybdopterin guanine dinucleotide)</name>
        <dbReference type="ChEBI" id="CHEBI:60539"/>
    </ligand>
</feature>
<feature type="binding site" evidence="1">
    <location>
        <position position="372"/>
    </location>
    <ligand>
        <name>Mo-bis(molybdopterin guanine dinucleotide)</name>
        <dbReference type="ChEBI" id="CHEBI:60539"/>
    </ligand>
</feature>
<feature type="binding site" evidence="1">
    <location>
        <position position="376"/>
    </location>
    <ligand>
        <name>Mo-bis(molybdopterin guanine dinucleotide)</name>
        <dbReference type="ChEBI" id="CHEBI:60539"/>
    </ligand>
</feature>
<feature type="binding site" evidence="1">
    <location>
        <position position="482"/>
    </location>
    <ligand>
        <name>Mo-bis(molybdopterin guanine dinucleotide)</name>
        <dbReference type="ChEBI" id="CHEBI:60539"/>
    </ligand>
</feature>
<feature type="binding site" evidence="1">
    <location>
        <begin position="508"/>
        <end position="509"/>
    </location>
    <ligand>
        <name>Mo-bis(molybdopterin guanine dinucleotide)</name>
        <dbReference type="ChEBI" id="CHEBI:60539"/>
    </ligand>
</feature>
<feature type="binding site" evidence="1">
    <location>
        <position position="531"/>
    </location>
    <ligand>
        <name>Mo-bis(molybdopterin guanine dinucleotide)</name>
        <dbReference type="ChEBI" id="CHEBI:60539"/>
    </ligand>
</feature>
<feature type="binding site" evidence="1">
    <location>
        <position position="558"/>
    </location>
    <ligand>
        <name>Mo-bis(molybdopterin guanine dinucleotide)</name>
        <dbReference type="ChEBI" id="CHEBI:60539"/>
    </ligand>
</feature>
<feature type="binding site" evidence="1">
    <location>
        <begin position="718"/>
        <end position="727"/>
    </location>
    <ligand>
        <name>Mo-bis(molybdopterin guanine dinucleotide)</name>
        <dbReference type="ChEBI" id="CHEBI:60539"/>
    </ligand>
</feature>
<feature type="binding site" evidence="1">
    <location>
        <position position="794"/>
    </location>
    <ligand>
        <name>substrate</name>
    </ligand>
</feature>
<feature type="binding site" evidence="1">
    <location>
        <position position="802"/>
    </location>
    <ligand>
        <name>Mo-bis(molybdopterin guanine dinucleotide)</name>
        <dbReference type="ChEBI" id="CHEBI:60539"/>
    </ligand>
</feature>
<feature type="binding site" evidence="1">
    <location>
        <position position="819"/>
    </location>
    <ligand>
        <name>Mo-bis(molybdopterin guanine dinucleotide)</name>
        <dbReference type="ChEBI" id="CHEBI:60539"/>
    </ligand>
</feature>
<keyword id="KW-0004">4Fe-4S</keyword>
<keyword id="KW-0249">Electron transport</keyword>
<keyword id="KW-0408">Iron</keyword>
<keyword id="KW-0411">Iron-sulfur</keyword>
<keyword id="KW-0479">Metal-binding</keyword>
<keyword id="KW-0500">Molybdenum</keyword>
<keyword id="KW-0534">Nitrate assimilation</keyword>
<keyword id="KW-0560">Oxidoreductase</keyword>
<keyword id="KW-0574">Periplasm</keyword>
<keyword id="KW-0732">Signal</keyword>
<keyword id="KW-0813">Transport</keyword>
<dbReference type="EC" id="1.9.6.1" evidence="1"/>
<dbReference type="EMBL" id="CP000901">
    <property type="protein sequence ID" value="ABX87120.1"/>
    <property type="molecule type" value="Genomic_DNA"/>
</dbReference>
<dbReference type="RefSeq" id="WP_011171900.1">
    <property type="nucleotide sequence ID" value="NZ_CP009935.1"/>
</dbReference>
<dbReference type="SMR" id="A9QZL3"/>
<dbReference type="GeneID" id="49785228"/>
<dbReference type="KEGG" id="ypg:YpAngola_A2791"/>
<dbReference type="PATRIC" id="fig|349746.12.peg.3824"/>
<dbReference type="GO" id="GO:0016020">
    <property type="term" value="C:membrane"/>
    <property type="evidence" value="ECO:0007669"/>
    <property type="project" value="TreeGrafter"/>
</dbReference>
<dbReference type="GO" id="GO:0009325">
    <property type="term" value="C:nitrate reductase complex"/>
    <property type="evidence" value="ECO:0007669"/>
    <property type="project" value="TreeGrafter"/>
</dbReference>
<dbReference type="GO" id="GO:0042597">
    <property type="term" value="C:periplasmic space"/>
    <property type="evidence" value="ECO:0007669"/>
    <property type="project" value="UniProtKB-SubCell"/>
</dbReference>
<dbReference type="GO" id="GO:0051539">
    <property type="term" value="F:4 iron, 4 sulfur cluster binding"/>
    <property type="evidence" value="ECO:0007669"/>
    <property type="project" value="UniProtKB-KW"/>
</dbReference>
<dbReference type="GO" id="GO:0009055">
    <property type="term" value="F:electron transfer activity"/>
    <property type="evidence" value="ECO:0007669"/>
    <property type="project" value="UniProtKB-UniRule"/>
</dbReference>
<dbReference type="GO" id="GO:0005506">
    <property type="term" value="F:iron ion binding"/>
    <property type="evidence" value="ECO:0007669"/>
    <property type="project" value="UniProtKB-UniRule"/>
</dbReference>
<dbReference type="GO" id="GO:0030151">
    <property type="term" value="F:molybdenum ion binding"/>
    <property type="evidence" value="ECO:0007669"/>
    <property type="project" value="InterPro"/>
</dbReference>
<dbReference type="GO" id="GO:0043546">
    <property type="term" value="F:molybdopterin cofactor binding"/>
    <property type="evidence" value="ECO:0007669"/>
    <property type="project" value="InterPro"/>
</dbReference>
<dbReference type="GO" id="GO:0050140">
    <property type="term" value="F:nitrate reductase (cytochrome) activity"/>
    <property type="evidence" value="ECO:0007669"/>
    <property type="project" value="UniProtKB-EC"/>
</dbReference>
<dbReference type="GO" id="GO:0045333">
    <property type="term" value="P:cellular respiration"/>
    <property type="evidence" value="ECO:0007669"/>
    <property type="project" value="UniProtKB-ARBA"/>
</dbReference>
<dbReference type="GO" id="GO:0006777">
    <property type="term" value="P:Mo-molybdopterin cofactor biosynthetic process"/>
    <property type="evidence" value="ECO:0007669"/>
    <property type="project" value="UniProtKB-UniRule"/>
</dbReference>
<dbReference type="GO" id="GO:0042128">
    <property type="term" value="P:nitrate assimilation"/>
    <property type="evidence" value="ECO:0007669"/>
    <property type="project" value="UniProtKB-UniRule"/>
</dbReference>
<dbReference type="CDD" id="cd02791">
    <property type="entry name" value="MopB_CT_Nitrate-R-NapA-like"/>
    <property type="match status" value="1"/>
</dbReference>
<dbReference type="CDD" id="cd02754">
    <property type="entry name" value="MopB_Nitrate-R-NapA-like"/>
    <property type="match status" value="1"/>
</dbReference>
<dbReference type="FunFam" id="2.40.40.20:FF:000005">
    <property type="entry name" value="Periplasmic nitrate reductase"/>
    <property type="match status" value="1"/>
</dbReference>
<dbReference type="Gene3D" id="2.40.40.20">
    <property type="match status" value="1"/>
</dbReference>
<dbReference type="Gene3D" id="3.30.200.210">
    <property type="match status" value="1"/>
</dbReference>
<dbReference type="Gene3D" id="3.40.50.740">
    <property type="match status" value="1"/>
</dbReference>
<dbReference type="Gene3D" id="3.40.228.10">
    <property type="entry name" value="Dimethylsulfoxide Reductase, domain 2"/>
    <property type="match status" value="1"/>
</dbReference>
<dbReference type="HAMAP" id="MF_01630">
    <property type="entry name" value="Nitrate_reduct_NapA"/>
    <property type="match status" value="1"/>
</dbReference>
<dbReference type="InterPro" id="IPR009010">
    <property type="entry name" value="Asp_de-COase-like_dom_sf"/>
</dbReference>
<dbReference type="InterPro" id="IPR041957">
    <property type="entry name" value="CT_Nitrate-R-NapA-like"/>
</dbReference>
<dbReference type="InterPro" id="IPR006657">
    <property type="entry name" value="MoPterin_dinucl-bd_dom"/>
</dbReference>
<dbReference type="InterPro" id="IPR006656">
    <property type="entry name" value="Mopterin_OxRdtase"/>
</dbReference>
<dbReference type="InterPro" id="IPR006963">
    <property type="entry name" value="Mopterin_OxRdtase_4Fe-4S_dom"/>
</dbReference>
<dbReference type="InterPro" id="IPR027467">
    <property type="entry name" value="MopterinOxRdtase_cofactor_BS"/>
</dbReference>
<dbReference type="InterPro" id="IPR010051">
    <property type="entry name" value="Periplasm_NO3_reductase_lsu"/>
</dbReference>
<dbReference type="InterPro" id="IPR050123">
    <property type="entry name" value="Prok_molybdopt-oxidoreductase"/>
</dbReference>
<dbReference type="InterPro" id="IPR006311">
    <property type="entry name" value="TAT_signal"/>
</dbReference>
<dbReference type="InterPro" id="IPR019546">
    <property type="entry name" value="TAT_signal_bac_arc"/>
</dbReference>
<dbReference type="NCBIfam" id="TIGR01706">
    <property type="entry name" value="NAPA"/>
    <property type="match status" value="1"/>
</dbReference>
<dbReference type="NCBIfam" id="NF010055">
    <property type="entry name" value="PRK13532.1"/>
    <property type="match status" value="1"/>
</dbReference>
<dbReference type="NCBIfam" id="TIGR01409">
    <property type="entry name" value="TAT_signal_seq"/>
    <property type="match status" value="1"/>
</dbReference>
<dbReference type="PANTHER" id="PTHR43105:SF11">
    <property type="entry name" value="PERIPLASMIC NITRATE REDUCTASE"/>
    <property type="match status" value="1"/>
</dbReference>
<dbReference type="PANTHER" id="PTHR43105">
    <property type="entry name" value="RESPIRATORY NITRATE REDUCTASE"/>
    <property type="match status" value="1"/>
</dbReference>
<dbReference type="Pfam" id="PF04879">
    <property type="entry name" value="Molybdop_Fe4S4"/>
    <property type="match status" value="1"/>
</dbReference>
<dbReference type="Pfam" id="PF00384">
    <property type="entry name" value="Molybdopterin"/>
    <property type="match status" value="1"/>
</dbReference>
<dbReference type="Pfam" id="PF01568">
    <property type="entry name" value="Molydop_binding"/>
    <property type="match status" value="1"/>
</dbReference>
<dbReference type="Pfam" id="PF10518">
    <property type="entry name" value="TAT_signal"/>
    <property type="match status" value="1"/>
</dbReference>
<dbReference type="SMART" id="SM00926">
    <property type="entry name" value="Molybdop_Fe4S4"/>
    <property type="match status" value="1"/>
</dbReference>
<dbReference type="SUPFAM" id="SSF50692">
    <property type="entry name" value="ADC-like"/>
    <property type="match status" value="1"/>
</dbReference>
<dbReference type="SUPFAM" id="SSF53706">
    <property type="entry name" value="Formate dehydrogenase/DMSO reductase, domains 1-3"/>
    <property type="match status" value="1"/>
</dbReference>
<dbReference type="PROSITE" id="PS51669">
    <property type="entry name" value="4FE4S_MOW_BIS_MGD"/>
    <property type="match status" value="1"/>
</dbReference>
<dbReference type="PROSITE" id="PS00551">
    <property type="entry name" value="MOLYBDOPTERIN_PROK_1"/>
    <property type="match status" value="1"/>
</dbReference>
<dbReference type="PROSITE" id="PS51318">
    <property type="entry name" value="TAT"/>
    <property type="match status" value="1"/>
</dbReference>
<proteinExistence type="inferred from homology"/>
<comment type="function">
    <text evidence="1">Catalytic subunit of the periplasmic nitrate reductase complex NapAB. Receives electrons from NapB and catalyzes the reduction of nitrate to nitrite.</text>
</comment>
<comment type="catalytic activity">
    <reaction evidence="1">
        <text>2 Fe(II)-[cytochrome] + nitrate + 2 H(+) = 2 Fe(III)-[cytochrome] + nitrite + H2O</text>
        <dbReference type="Rhea" id="RHEA:12909"/>
        <dbReference type="Rhea" id="RHEA-COMP:11777"/>
        <dbReference type="Rhea" id="RHEA-COMP:11778"/>
        <dbReference type="ChEBI" id="CHEBI:15377"/>
        <dbReference type="ChEBI" id="CHEBI:15378"/>
        <dbReference type="ChEBI" id="CHEBI:16301"/>
        <dbReference type="ChEBI" id="CHEBI:17632"/>
        <dbReference type="ChEBI" id="CHEBI:29033"/>
        <dbReference type="ChEBI" id="CHEBI:29034"/>
        <dbReference type="EC" id="1.9.6.1"/>
    </reaction>
</comment>
<comment type="cofactor">
    <cofactor evidence="1">
        <name>[4Fe-4S] cluster</name>
        <dbReference type="ChEBI" id="CHEBI:49883"/>
    </cofactor>
    <text evidence="1">Binds 1 [4Fe-4S] cluster.</text>
</comment>
<comment type="cofactor">
    <cofactor evidence="1">
        <name>Mo-bis(molybdopterin guanine dinucleotide)</name>
        <dbReference type="ChEBI" id="CHEBI:60539"/>
    </cofactor>
    <text evidence="1">Binds 1 molybdenum-bis(molybdopterin guanine dinucleotide) (Mo-bis-MGD) cofactor per subunit.</text>
</comment>
<comment type="subunit">
    <text evidence="1">Component of the periplasmic nitrate reductase NapAB complex composed of NapA and NapB.</text>
</comment>
<comment type="subcellular location">
    <subcellularLocation>
        <location evidence="1">Periplasm</location>
    </subcellularLocation>
</comment>
<comment type="PTM">
    <text evidence="1">Predicted to be exported by the Tat system. The position of the signal peptide cleavage has not been experimentally proven.</text>
</comment>
<comment type="similarity">
    <text evidence="1">Belongs to the prokaryotic molybdopterin-containing oxidoreductase family. NasA/NapA/NarB subfamily.</text>
</comment>
<name>NAPA_YERPG</name>